<proteinExistence type="inferred from homology"/>
<gene>
    <name evidence="1" type="primary">leuB</name>
</gene>
<accession>Q9EVE1</accession>
<evidence type="ECO:0000255" key="1">
    <source>
        <dbReference type="HAMAP-Rule" id="MF_01033"/>
    </source>
</evidence>
<comment type="function">
    <text evidence="1">Catalyzes the oxidation of 3-carboxy-2-hydroxy-4-methylpentanoate (3-isopropylmalate) to 3-carboxy-4-methyl-2-oxopentanoate. The product decarboxylates to 4-methyl-2 oxopentanoate.</text>
</comment>
<comment type="catalytic activity">
    <reaction evidence="1">
        <text>(2R,3S)-3-isopropylmalate + NAD(+) = 4-methyl-2-oxopentanoate + CO2 + NADH</text>
        <dbReference type="Rhea" id="RHEA:32271"/>
        <dbReference type="ChEBI" id="CHEBI:16526"/>
        <dbReference type="ChEBI" id="CHEBI:17865"/>
        <dbReference type="ChEBI" id="CHEBI:35121"/>
        <dbReference type="ChEBI" id="CHEBI:57540"/>
        <dbReference type="ChEBI" id="CHEBI:57945"/>
        <dbReference type="EC" id="1.1.1.85"/>
    </reaction>
</comment>
<comment type="cofactor">
    <cofactor evidence="1">
        <name>Mg(2+)</name>
        <dbReference type="ChEBI" id="CHEBI:18420"/>
    </cofactor>
    <cofactor evidence="1">
        <name>Mn(2+)</name>
        <dbReference type="ChEBI" id="CHEBI:29035"/>
    </cofactor>
    <text evidence="1">Binds 1 Mg(2+) or Mn(2+) ion per subunit.</text>
</comment>
<comment type="pathway">
    <text evidence="1">Amino-acid biosynthesis; L-leucine biosynthesis; L-leucine from 3-methyl-2-oxobutanoate: step 3/4.</text>
</comment>
<comment type="subunit">
    <text evidence="1">Homodimer.</text>
</comment>
<comment type="subcellular location">
    <subcellularLocation>
        <location evidence="1">Cytoplasm</location>
    </subcellularLocation>
</comment>
<comment type="similarity">
    <text evidence="1">Belongs to the isocitrate and isopropylmalate dehydrogenases family. LeuB type 1 subfamily.</text>
</comment>
<reference key="1">
    <citation type="journal article" date="2001" name="J. Bacteriol.">
        <title>Vertical transmission of biosynthetic plasmids in aphid endosymbionts (Buchnera).</title>
        <authorList>
            <person name="Wernegreen J.J."/>
            <person name="Moran N.A."/>
        </authorList>
    </citation>
    <scope>NUCLEOTIDE SEQUENCE [GENOMIC DNA]</scope>
</reference>
<organism>
    <name type="scientific">Buchnera aphidicola subsp. Uroleucon rudbeckiae</name>
    <dbReference type="NCBI Taxonomy" id="118114"/>
    <lineage>
        <taxon>Bacteria</taxon>
        <taxon>Pseudomonadati</taxon>
        <taxon>Pseudomonadota</taxon>
        <taxon>Gammaproteobacteria</taxon>
        <taxon>Enterobacterales</taxon>
        <taxon>Erwiniaceae</taxon>
        <taxon>Buchnera</taxon>
    </lineage>
</organism>
<keyword id="KW-0028">Amino-acid biosynthesis</keyword>
<keyword id="KW-0100">Branched-chain amino acid biosynthesis</keyword>
<keyword id="KW-0963">Cytoplasm</keyword>
<keyword id="KW-0432">Leucine biosynthesis</keyword>
<keyword id="KW-0460">Magnesium</keyword>
<keyword id="KW-0464">Manganese</keyword>
<keyword id="KW-0479">Metal-binding</keyword>
<keyword id="KW-0520">NAD</keyword>
<keyword id="KW-0560">Oxidoreductase</keyword>
<keyword id="KW-0614">Plasmid</keyword>
<feature type="chain" id="PRO_0000083668" description="3-isopropylmalate dehydrogenase">
    <location>
        <begin position="1"/>
        <end position="363"/>
    </location>
</feature>
<feature type="binding site" evidence="1">
    <location>
        <begin position="78"/>
        <end position="91"/>
    </location>
    <ligand>
        <name>NAD(+)</name>
        <dbReference type="ChEBI" id="CHEBI:57540"/>
    </ligand>
</feature>
<feature type="binding site" evidence="1">
    <location>
        <position position="99"/>
    </location>
    <ligand>
        <name>substrate</name>
    </ligand>
</feature>
<feature type="binding site" evidence="1">
    <location>
        <position position="109"/>
    </location>
    <ligand>
        <name>substrate</name>
    </ligand>
</feature>
<feature type="binding site" evidence="1">
    <location>
        <position position="138"/>
    </location>
    <ligand>
        <name>substrate</name>
    </ligand>
</feature>
<feature type="binding site" evidence="1">
    <location>
        <position position="227"/>
    </location>
    <ligand>
        <name>Mg(2+)</name>
        <dbReference type="ChEBI" id="CHEBI:18420"/>
    </ligand>
</feature>
<feature type="binding site" evidence="1">
    <location>
        <position position="227"/>
    </location>
    <ligand>
        <name>substrate</name>
    </ligand>
</feature>
<feature type="binding site" evidence="1">
    <location>
        <position position="251"/>
    </location>
    <ligand>
        <name>Mg(2+)</name>
        <dbReference type="ChEBI" id="CHEBI:18420"/>
    </ligand>
</feature>
<feature type="binding site" evidence="1">
    <location>
        <position position="255"/>
    </location>
    <ligand>
        <name>Mg(2+)</name>
        <dbReference type="ChEBI" id="CHEBI:18420"/>
    </ligand>
</feature>
<feature type="binding site" evidence="1">
    <location>
        <begin position="285"/>
        <end position="297"/>
    </location>
    <ligand>
        <name>NAD(+)</name>
        <dbReference type="ChEBI" id="CHEBI:57540"/>
    </ligand>
</feature>
<feature type="site" description="Important for catalysis" evidence="1">
    <location>
        <position position="145"/>
    </location>
</feature>
<feature type="site" description="Important for catalysis" evidence="1">
    <location>
        <position position="195"/>
    </location>
</feature>
<geneLocation type="plasmid">
    <name>pLeu</name>
    <name>pBAp1</name>
</geneLocation>
<dbReference type="EC" id="1.1.1.85" evidence="1"/>
<dbReference type="EMBL" id="AF200469">
    <property type="protein sequence ID" value="AAG31928.1"/>
    <property type="molecule type" value="Genomic_DNA"/>
</dbReference>
<dbReference type="SMR" id="Q9EVE1"/>
<dbReference type="UniPathway" id="UPA00048">
    <property type="reaction ID" value="UER00072"/>
</dbReference>
<dbReference type="GO" id="GO:0005829">
    <property type="term" value="C:cytosol"/>
    <property type="evidence" value="ECO:0007669"/>
    <property type="project" value="TreeGrafter"/>
</dbReference>
<dbReference type="GO" id="GO:0003862">
    <property type="term" value="F:3-isopropylmalate dehydrogenase activity"/>
    <property type="evidence" value="ECO:0007669"/>
    <property type="project" value="UniProtKB-UniRule"/>
</dbReference>
<dbReference type="GO" id="GO:0000287">
    <property type="term" value="F:magnesium ion binding"/>
    <property type="evidence" value="ECO:0007669"/>
    <property type="project" value="InterPro"/>
</dbReference>
<dbReference type="GO" id="GO:0051287">
    <property type="term" value="F:NAD binding"/>
    <property type="evidence" value="ECO:0007669"/>
    <property type="project" value="InterPro"/>
</dbReference>
<dbReference type="GO" id="GO:0009098">
    <property type="term" value="P:L-leucine biosynthetic process"/>
    <property type="evidence" value="ECO:0007669"/>
    <property type="project" value="UniProtKB-UniRule"/>
</dbReference>
<dbReference type="FunFam" id="3.40.718.10:FF:000006">
    <property type="entry name" value="3-isopropylmalate dehydrogenase"/>
    <property type="match status" value="1"/>
</dbReference>
<dbReference type="Gene3D" id="3.40.718.10">
    <property type="entry name" value="Isopropylmalate Dehydrogenase"/>
    <property type="match status" value="1"/>
</dbReference>
<dbReference type="HAMAP" id="MF_01033">
    <property type="entry name" value="LeuB_type1"/>
    <property type="match status" value="1"/>
</dbReference>
<dbReference type="InterPro" id="IPR019818">
    <property type="entry name" value="IsoCit/isopropylmalate_DH_CS"/>
</dbReference>
<dbReference type="InterPro" id="IPR024084">
    <property type="entry name" value="IsoPropMal-DH-like_dom"/>
</dbReference>
<dbReference type="InterPro" id="IPR004429">
    <property type="entry name" value="Isopropylmalate_DH"/>
</dbReference>
<dbReference type="NCBIfam" id="TIGR00169">
    <property type="entry name" value="leuB"/>
    <property type="match status" value="1"/>
</dbReference>
<dbReference type="PANTHER" id="PTHR42979">
    <property type="entry name" value="3-ISOPROPYLMALATE DEHYDROGENASE"/>
    <property type="match status" value="1"/>
</dbReference>
<dbReference type="PANTHER" id="PTHR42979:SF1">
    <property type="entry name" value="3-ISOPROPYLMALATE DEHYDROGENASE"/>
    <property type="match status" value="1"/>
</dbReference>
<dbReference type="Pfam" id="PF00180">
    <property type="entry name" value="Iso_dh"/>
    <property type="match status" value="1"/>
</dbReference>
<dbReference type="SMART" id="SM01329">
    <property type="entry name" value="Iso_dh"/>
    <property type="match status" value="1"/>
</dbReference>
<dbReference type="SUPFAM" id="SSF53659">
    <property type="entry name" value="Isocitrate/Isopropylmalate dehydrogenase-like"/>
    <property type="match status" value="1"/>
</dbReference>
<dbReference type="PROSITE" id="PS00470">
    <property type="entry name" value="IDH_IMDH"/>
    <property type="match status" value="1"/>
</dbReference>
<protein>
    <recommendedName>
        <fullName evidence="1">3-isopropylmalate dehydrogenase</fullName>
        <ecNumber evidence="1">1.1.1.85</ecNumber>
    </recommendedName>
    <alternativeName>
        <fullName evidence="1">3-IPM-DH</fullName>
    </alternativeName>
    <alternativeName>
        <fullName evidence="1">Beta-IPM dehydrogenase</fullName>
        <shortName evidence="1">IMDH</shortName>
    </alternativeName>
</protein>
<sequence>MKKKYRIAVLPGDGIGPEVMREAYKILNILKNHFSLPLETREFNIGGSAIDQEGTALPKKTLLGCENSDAILFGSVGGKKWDDLPINQRPERASLLPLRKHFNLFANLRPAKLYSELKYLSPLRSDIIKNGFDILCIRELTGGLYFGKPTGRLKKNNIEYAFDTEIYYNYEITRIAHLAFQLAQTRNFKICSIDKSNVLNSSVLWREIVKKVSKNYPDVHLSHLYIDNATMQIIKDPNQFDILLCSNLFGDIISDECAIITGSIGMLPSASLNEKKFGLYEPAGGSAPDIEGKNIANPIAQILSVSMLVRYGMNLKTIADKIDQSVISVLKKGYRTADISNNNNYLKTNEMGDVIANTLISGE</sequence>
<name>LEU3_BUCUD</name>